<gene>
    <name evidence="1" type="primary">fmt</name>
    <name type="ordered locus">SAG0316</name>
</gene>
<comment type="function">
    <text evidence="1">Attaches a formyl group to the free amino group of methionyl-tRNA(fMet). The formyl group appears to play a dual role in the initiator identity of N-formylmethionyl-tRNA by promoting its recognition by IF2 and preventing the misappropriation of this tRNA by the elongation apparatus.</text>
</comment>
<comment type="catalytic activity">
    <reaction evidence="1">
        <text>L-methionyl-tRNA(fMet) + (6R)-10-formyltetrahydrofolate = N-formyl-L-methionyl-tRNA(fMet) + (6S)-5,6,7,8-tetrahydrofolate + H(+)</text>
        <dbReference type="Rhea" id="RHEA:24380"/>
        <dbReference type="Rhea" id="RHEA-COMP:9952"/>
        <dbReference type="Rhea" id="RHEA-COMP:9953"/>
        <dbReference type="ChEBI" id="CHEBI:15378"/>
        <dbReference type="ChEBI" id="CHEBI:57453"/>
        <dbReference type="ChEBI" id="CHEBI:78530"/>
        <dbReference type="ChEBI" id="CHEBI:78844"/>
        <dbReference type="ChEBI" id="CHEBI:195366"/>
        <dbReference type="EC" id="2.1.2.9"/>
    </reaction>
</comment>
<comment type="similarity">
    <text evidence="1">Belongs to the Fmt family.</text>
</comment>
<accession>P64138</accession>
<accession>Q8E1N8</accession>
<accession>Q8E754</accession>
<protein>
    <recommendedName>
        <fullName evidence="1">Methionyl-tRNA formyltransferase</fullName>
        <ecNumber evidence="1">2.1.2.9</ecNumber>
    </recommendedName>
</protein>
<reference key="1">
    <citation type="journal article" date="2002" name="Proc. Natl. Acad. Sci. U.S.A.">
        <title>Complete genome sequence and comparative genomic analysis of an emerging human pathogen, serotype V Streptococcus agalactiae.</title>
        <authorList>
            <person name="Tettelin H."/>
            <person name="Masignani V."/>
            <person name="Cieslewicz M.J."/>
            <person name="Eisen J.A."/>
            <person name="Peterson S.N."/>
            <person name="Wessels M.R."/>
            <person name="Paulsen I.T."/>
            <person name="Nelson K.E."/>
            <person name="Margarit I."/>
            <person name="Read T.D."/>
            <person name="Madoff L.C."/>
            <person name="Wolf A.M."/>
            <person name="Beanan M.J."/>
            <person name="Brinkac L.M."/>
            <person name="Daugherty S.C."/>
            <person name="DeBoy R.T."/>
            <person name="Durkin A.S."/>
            <person name="Kolonay J.F."/>
            <person name="Madupu R."/>
            <person name="Lewis M.R."/>
            <person name="Radune D."/>
            <person name="Fedorova N.B."/>
            <person name="Scanlan D."/>
            <person name="Khouri H.M."/>
            <person name="Mulligan S."/>
            <person name="Carty H.A."/>
            <person name="Cline R.T."/>
            <person name="Van Aken S.E."/>
            <person name="Gill J."/>
            <person name="Scarselli M."/>
            <person name="Mora M."/>
            <person name="Iacobini E.T."/>
            <person name="Brettoni C."/>
            <person name="Galli G."/>
            <person name="Mariani M."/>
            <person name="Vegni F."/>
            <person name="Maione D."/>
            <person name="Rinaudo D."/>
            <person name="Rappuoli R."/>
            <person name="Telford J.L."/>
            <person name="Kasper D.L."/>
            <person name="Grandi G."/>
            <person name="Fraser C.M."/>
        </authorList>
    </citation>
    <scope>NUCLEOTIDE SEQUENCE [LARGE SCALE GENOMIC DNA]</scope>
    <source>
        <strain>ATCC BAA-611 / 2603 V/R</strain>
    </source>
</reference>
<evidence type="ECO:0000255" key="1">
    <source>
        <dbReference type="HAMAP-Rule" id="MF_00182"/>
    </source>
</evidence>
<organism>
    <name type="scientific">Streptococcus agalactiae serotype V (strain ATCC BAA-611 / 2603 V/R)</name>
    <dbReference type="NCBI Taxonomy" id="208435"/>
    <lineage>
        <taxon>Bacteria</taxon>
        <taxon>Bacillati</taxon>
        <taxon>Bacillota</taxon>
        <taxon>Bacilli</taxon>
        <taxon>Lactobacillales</taxon>
        <taxon>Streptococcaceae</taxon>
        <taxon>Streptococcus</taxon>
    </lineage>
</organism>
<name>FMT_STRA5</name>
<dbReference type="EC" id="2.1.2.9" evidence="1"/>
<dbReference type="EMBL" id="AE009948">
    <property type="protein sequence ID" value="AAM99222.1"/>
    <property type="molecule type" value="Genomic_DNA"/>
</dbReference>
<dbReference type="RefSeq" id="NP_687350.1">
    <property type="nucleotide sequence ID" value="NC_004116.1"/>
</dbReference>
<dbReference type="RefSeq" id="WP_000163893.1">
    <property type="nucleotide sequence ID" value="NC_004116.1"/>
</dbReference>
<dbReference type="SMR" id="P64138"/>
<dbReference type="STRING" id="208435.SAG0316"/>
<dbReference type="GeneID" id="66885288"/>
<dbReference type="KEGG" id="sag:SAG0316"/>
<dbReference type="PATRIC" id="fig|208435.3.peg.312"/>
<dbReference type="HOGENOM" id="CLU_033347_1_1_9"/>
<dbReference type="OrthoDB" id="9802815at2"/>
<dbReference type="Proteomes" id="UP000000821">
    <property type="component" value="Chromosome"/>
</dbReference>
<dbReference type="GO" id="GO:0005829">
    <property type="term" value="C:cytosol"/>
    <property type="evidence" value="ECO:0007669"/>
    <property type="project" value="TreeGrafter"/>
</dbReference>
<dbReference type="GO" id="GO:0004479">
    <property type="term" value="F:methionyl-tRNA formyltransferase activity"/>
    <property type="evidence" value="ECO:0007669"/>
    <property type="project" value="UniProtKB-UniRule"/>
</dbReference>
<dbReference type="CDD" id="cd08646">
    <property type="entry name" value="FMT_core_Met-tRNA-FMT_N"/>
    <property type="match status" value="1"/>
</dbReference>
<dbReference type="CDD" id="cd08704">
    <property type="entry name" value="Met_tRNA_FMT_C"/>
    <property type="match status" value="1"/>
</dbReference>
<dbReference type="FunFam" id="3.40.50.170:FF:000004">
    <property type="entry name" value="Methionyl-tRNA formyltransferase"/>
    <property type="match status" value="1"/>
</dbReference>
<dbReference type="Gene3D" id="3.10.25.10">
    <property type="entry name" value="Formyl transferase, C-terminal domain"/>
    <property type="match status" value="1"/>
</dbReference>
<dbReference type="Gene3D" id="3.40.50.170">
    <property type="entry name" value="Formyl transferase, N-terminal domain"/>
    <property type="match status" value="1"/>
</dbReference>
<dbReference type="HAMAP" id="MF_00182">
    <property type="entry name" value="Formyl_trans"/>
    <property type="match status" value="1"/>
</dbReference>
<dbReference type="InterPro" id="IPR005794">
    <property type="entry name" value="Fmt"/>
</dbReference>
<dbReference type="InterPro" id="IPR005793">
    <property type="entry name" value="Formyl_trans_C"/>
</dbReference>
<dbReference type="InterPro" id="IPR037022">
    <property type="entry name" value="Formyl_trans_C_sf"/>
</dbReference>
<dbReference type="InterPro" id="IPR002376">
    <property type="entry name" value="Formyl_transf_N"/>
</dbReference>
<dbReference type="InterPro" id="IPR036477">
    <property type="entry name" value="Formyl_transf_N_sf"/>
</dbReference>
<dbReference type="InterPro" id="IPR011034">
    <property type="entry name" value="Formyl_transferase-like_C_sf"/>
</dbReference>
<dbReference type="InterPro" id="IPR001555">
    <property type="entry name" value="GART_AS"/>
</dbReference>
<dbReference type="InterPro" id="IPR044135">
    <property type="entry name" value="Met-tRNA-FMT_C"/>
</dbReference>
<dbReference type="InterPro" id="IPR041711">
    <property type="entry name" value="Met-tRNA-FMT_N"/>
</dbReference>
<dbReference type="NCBIfam" id="TIGR00460">
    <property type="entry name" value="fmt"/>
    <property type="match status" value="1"/>
</dbReference>
<dbReference type="PANTHER" id="PTHR11138">
    <property type="entry name" value="METHIONYL-TRNA FORMYLTRANSFERASE"/>
    <property type="match status" value="1"/>
</dbReference>
<dbReference type="PANTHER" id="PTHR11138:SF5">
    <property type="entry name" value="METHIONYL-TRNA FORMYLTRANSFERASE, MITOCHONDRIAL"/>
    <property type="match status" value="1"/>
</dbReference>
<dbReference type="Pfam" id="PF02911">
    <property type="entry name" value="Formyl_trans_C"/>
    <property type="match status" value="1"/>
</dbReference>
<dbReference type="Pfam" id="PF00551">
    <property type="entry name" value="Formyl_trans_N"/>
    <property type="match status" value="1"/>
</dbReference>
<dbReference type="SUPFAM" id="SSF50486">
    <property type="entry name" value="FMT C-terminal domain-like"/>
    <property type="match status" value="1"/>
</dbReference>
<dbReference type="SUPFAM" id="SSF53328">
    <property type="entry name" value="Formyltransferase"/>
    <property type="match status" value="1"/>
</dbReference>
<dbReference type="PROSITE" id="PS00373">
    <property type="entry name" value="GART"/>
    <property type="match status" value="1"/>
</dbReference>
<proteinExistence type="inferred from homology"/>
<keyword id="KW-0648">Protein biosynthesis</keyword>
<keyword id="KW-1185">Reference proteome</keyword>
<keyword id="KW-0808">Transferase</keyword>
<feature type="chain" id="PRO_0000083054" description="Methionyl-tRNA formyltransferase">
    <location>
        <begin position="1"/>
        <end position="311"/>
    </location>
</feature>
<feature type="binding site" evidence="1">
    <location>
        <begin position="110"/>
        <end position="113"/>
    </location>
    <ligand>
        <name>(6S)-5,6,7,8-tetrahydrofolate</name>
        <dbReference type="ChEBI" id="CHEBI:57453"/>
    </ligand>
</feature>
<sequence>MTKLLFMGTPDFSATVLKGILADGKYDVLAVVTQPDRAVGRKKEIKMTPVKEVALENNIPVYQPEKLSGSPELEQLMTLGADGIVTAAFGQFLPTKLLESVGFAINVHASLLPKYRGGAPIHYAIINGEKEAGVTIMEMVAKMDAGDMVSKASVEITDEDNVGTMFDRLAVVGRDLLLDTLPGYLSGDIKPIPQNEEEVSFSPNISPDEERIDWNKSSRDIFNHVRGMYPWPVAHTLLEGNRFKLYEVTMSEGKGSPGQVIAKTKNSLTVATGDGAIELKSVQPAGKPRMDIKDFLNGVGRNLEIGDKFGE</sequence>